<comment type="function">
    <text evidence="1 2 5">Probably part of a 4-gene DNA damage response locus in which the upstream ups system, in combination with this downstream locus, functions in homologous recombination to rescue Sulfolobales from DNA-damaging threats (Probable). DNA repair enzyme that has both DNA N-glycosylase activity and AP-lyase activity (By similarity). The DNA N-glycosylase activity releases various damaged pyrimidines from DNA by cleaving the N-glycosidic bond, leaving an AP (apurinic/apyrimidinic) site (By similarity). The AP-lyase activity cleaves the phosphodiester bond 3' to the AP site by a beta-elimination, leaving a 3'-terminal unsaturated sugar and a product with a terminal 5'-phosphate (Probable) (PubMed:26148716). Nicks UV-treated plasmid DNA in a dose-dependent manner, has no activity on untreated DNA (PubMed:26148716).</text>
</comment>
<comment type="catalytic activity">
    <reaction evidence="2">
        <text>2'-deoxyribonucleotide-(2'-deoxyribose 5'-phosphate)-2'-deoxyribonucleotide-DNA = a 3'-end 2'-deoxyribonucleotide-(2,3-dehydro-2,3-deoxyribose 5'-phosphate)-DNA + a 5'-end 5'-phospho-2'-deoxyribonucleoside-DNA + H(+)</text>
        <dbReference type="Rhea" id="RHEA:66592"/>
        <dbReference type="Rhea" id="RHEA-COMP:13180"/>
        <dbReference type="Rhea" id="RHEA-COMP:16897"/>
        <dbReference type="Rhea" id="RHEA-COMP:17067"/>
        <dbReference type="ChEBI" id="CHEBI:15378"/>
        <dbReference type="ChEBI" id="CHEBI:136412"/>
        <dbReference type="ChEBI" id="CHEBI:157695"/>
        <dbReference type="ChEBI" id="CHEBI:167181"/>
        <dbReference type="EC" id="4.2.99.18"/>
    </reaction>
</comment>
<comment type="cofactor">
    <cofactor evidence="1">
        <name>[4Fe-4S] cluster</name>
        <dbReference type="ChEBI" id="CHEBI:49883"/>
    </cofactor>
    <text evidence="1">Binds 1 [4Fe-4S] cluster.</text>
</comment>
<comment type="induction">
    <text evidence="2">By UV light.</text>
</comment>
<comment type="disruption phenotype">
    <text evidence="2">No visible growth phenotype, reduced survival after UV treatment.</text>
</comment>
<comment type="similarity">
    <text evidence="4">Belongs to the Nth/MutY family.</text>
</comment>
<evidence type="ECO:0000250" key="1">
    <source>
        <dbReference type="UniProtKB" id="P0AB83"/>
    </source>
</evidence>
<evidence type="ECO:0000269" key="2">
    <source>
    </source>
</evidence>
<evidence type="ECO:0000303" key="3">
    <source>
    </source>
</evidence>
<evidence type="ECO:0000305" key="4"/>
<evidence type="ECO:0000305" key="5">
    <source>
    </source>
</evidence>
<evidence type="ECO:0000312" key="6">
    <source>
        <dbReference type="EMBL" id="AAY80818.1"/>
    </source>
</evidence>
<keyword id="KW-0004">4Fe-4S</keyword>
<keyword id="KW-0227">DNA damage</keyword>
<keyword id="KW-0238">DNA-binding</keyword>
<keyword id="KW-0255">Endonuclease</keyword>
<keyword id="KW-0326">Glycosidase</keyword>
<keyword id="KW-0378">Hydrolase</keyword>
<keyword id="KW-0408">Iron</keyword>
<keyword id="KW-0411">Iron-sulfur</keyword>
<keyword id="KW-0456">Lyase</keyword>
<keyword id="KW-0479">Metal-binding</keyword>
<keyword id="KW-0540">Nuclease</keyword>
<keyword id="KW-1185">Reference proteome</keyword>
<protein>
    <recommendedName>
        <fullName evidence="3">Endonuclease III</fullName>
        <ecNumber evidence="2">4.2.99.18</ecNumber>
    </recommendedName>
    <alternativeName>
        <fullName evidence="3">DNA-(apurinic or apyrimidinic site) lyase</fullName>
    </alternativeName>
</protein>
<dbReference type="EC" id="4.2.99.18" evidence="2"/>
<dbReference type="EMBL" id="CP000077">
    <property type="protein sequence ID" value="AAY80818.1"/>
    <property type="molecule type" value="Genomic_DNA"/>
</dbReference>
<dbReference type="STRING" id="330779.Saci_1497"/>
<dbReference type="KEGG" id="sai:Saci_1497"/>
<dbReference type="PATRIC" id="fig|330779.12.peg.1443"/>
<dbReference type="eggNOG" id="arCOG00459">
    <property type="taxonomic scope" value="Archaea"/>
</dbReference>
<dbReference type="HOGENOM" id="CLU_012862_3_4_2"/>
<dbReference type="Proteomes" id="UP000001018">
    <property type="component" value="Chromosome"/>
</dbReference>
<dbReference type="GO" id="GO:0051539">
    <property type="term" value="F:4 iron, 4 sulfur cluster binding"/>
    <property type="evidence" value="ECO:0007669"/>
    <property type="project" value="UniProtKB-KW"/>
</dbReference>
<dbReference type="GO" id="GO:0140078">
    <property type="term" value="F:class I DNA-(apurinic or apyrimidinic site) endonuclease activity"/>
    <property type="evidence" value="ECO:0007669"/>
    <property type="project" value="UniProtKB-EC"/>
</dbReference>
<dbReference type="GO" id="GO:0019104">
    <property type="term" value="F:DNA N-glycosylase activity"/>
    <property type="evidence" value="ECO:0007669"/>
    <property type="project" value="TreeGrafter"/>
</dbReference>
<dbReference type="GO" id="GO:0004519">
    <property type="term" value="F:endonuclease activity"/>
    <property type="evidence" value="ECO:0007669"/>
    <property type="project" value="UniProtKB-KW"/>
</dbReference>
<dbReference type="GO" id="GO:0046872">
    <property type="term" value="F:metal ion binding"/>
    <property type="evidence" value="ECO:0007669"/>
    <property type="project" value="UniProtKB-KW"/>
</dbReference>
<dbReference type="GO" id="GO:0006285">
    <property type="term" value="P:base-excision repair, AP site formation"/>
    <property type="evidence" value="ECO:0007669"/>
    <property type="project" value="TreeGrafter"/>
</dbReference>
<dbReference type="CDD" id="cd00056">
    <property type="entry name" value="ENDO3c"/>
    <property type="match status" value="1"/>
</dbReference>
<dbReference type="Gene3D" id="1.10.1670.10">
    <property type="entry name" value="Helix-hairpin-Helix base-excision DNA repair enzymes (C-terminal)"/>
    <property type="match status" value="1"/>
</dbReference>
<dbReference type="Gene3D" id="1.10.340.30">
    <property type="entry name" value="Hypothetical protein, domain 2"/>
    <property type="match status" value="1"/>
</dbReference>
<dbReference type="InterPro" id="IPR011257">
    <property type="entry name" value="DNA_glycosylase"/>
</dbReference>
<dbReference type="InterPro" id="IPR003651">
    <property type="entry name" value="Endonuclease3_FeS-loop_motif"/>
</dbReference>
<dbReference type="InterPro" id="IPR003265">
    <property type="entry name" value="HhH-GPD_domain"/>
</dbReference>
<dbReference type="InterPro" id="IPR023170">
    <property type="entry name" value="HhH_base_excis_C"/>
</dbReference>
<dbReference type="PANTHER" id="PTHR10359">
    <property type="entry name" value="A/G-SPECIFIC ADENINE GLYCOSYLASE/ENDONUCLEASE III"/>
    <property type="match status" value="1"/>
</dbReference>
<dbReference type="PANTHER" id="PTHR10359:SF18">
    <property type="entry name" value="ENDONUCLEASE III"/>
    <property type="match status" value="1"/>
</dbReference>
<dbReference type="Pfam" id="PF00730">
    <property type="entry name" value="HhH-GPD"/>
    <property type="match status" value="1"/>
</dbReference>
<dbReference type="PIRSF" id="PIRSF001435">
    <property type="entry name" value="Nth"/>
    <property type="match status" value="1"/>
</dbReference>
<dbReference type="SMART" id="SM00478">
    <property type="entry name" value="ENDO3c"/>
    <property type="match status" value="1"/>
</dbReference>
<dbReference type="SMART" id="SM00525">
    <property type="entry name" value="FES"/>
    <property type="match status" value="1"/>
</dbReference>
<dbReference type="SUPFAM" id="SSF48150">
    <property type="entry name" value="DNA-glycosylase"/>
    <property type="match status" value="1"/>
</dbReference>
<reference evidence="6" key="1">
    <citation type="journal article" date="2005" name="J. Bacteriol.">
        <title>The genome of Sulfolobus acidocaldarius, a model organism of the Crenarchaeota.</title>
        <authorList>
            <person name="Chen L."/>
            <person name="Bruegger K."/>
            <person name="Skovgaard M."/>
            <person name="Redder P."/>
            <person name="She Q."/>
            <person name="Torarinsson E."/>
            <person name="Greve B."/>
            <person name="Awayez M."/>
            <person name="Zibat A."/>
            <person name="Klenk H.-P."/>
            <person name="Garrett R.A."/>
        </authorList>
    </citation>
    <scope>NUCLEOTIDE SEQUENCE [LARGE SCALE GENOMIC DNA]</scope>
    <source>
        <strain>ATCC 33909 / DSM 639 / JCM 8929 / NBRC 15157 / NCIMB 11770</strain>
    </source>
</reference>
<reference key="2">
    <citation type="journal article" date="2015" name="J. Bacteriol.">
        <title>DNA Processing Proteins Involved in the UV-Induced Stress Response of Sulfolobales.</title>
        <authorList>
            <person name="van Wolferen M."/>
            <person name="Ma X."/>
            <person name="Albers S.V."/>
        </authorList>
    </citation>
    <scope>FUNCTION</scope>
    <scope>CATALYTIC ACTIVITY</scope>
    <scope>INDUCTION</scope>
    <scope>DISRUPTION PHENOTYPE</scope>
    <scope>MUTAGENESIS OF LYS-130 AND ASP-148</scope>
    <source>
        <strain>ATCC 33909 / DSM 639 / JCM 8929 / NBRC 15157 / NCIMB 11770</strain>
    </source>
</reference>
<sequence length="223" mass="25548">MDIANQLYMKLREEYKIDQKEFISSYICGKTRNVFATILATILSQNSTDKSALIAFSKLNETVGEITPDRIKHADINTIIDAIRVAGLGNSKARYIKNVAEVINDLDLNIEIDCQKLRDFLTAIEGIGDKTADVVLLTCFRCREFPIDTHIRRVISRLGFLGSSPKYKDISEYFKTRFSSEDLLNLHHLLIAHGRKTCKSRKPICDKCVIRDYCKYYLDNIKN</sequence>
<gene>
    <name evidence="4" type="primary">nth</name>
    <name evidence="6" type="ordered locus">Saci_1497</name>
</gene>
<accession>Q4J8R2</accession>
<organism>
    <name type="scientific">Sulfolobus acidocaldarius (strain ATCC 33909 / DSM 639 / JCM 8929 / NBRC 15157 / NCIMB 11770)</name>
    <dbReference type="NCBI Taxonomy" id="330779"/>
    <lineage>
        <taxon>Archaea</taxon>
        <taxon>Thermoproteota</taxon>
        <taxon>Thermoprotei</taxon>
        <taxon>Sulfolobales</taxon>
        <taxon>Sulfolobaceae</taxon>
        <taxon>Sulfolobus</taxon>
    </lineage>
</organism>
<name>END3_SULAC</name>
<proteinExistence type="evidence at protein level"/>
<feature type="chain" id="PRO_0000462449" description="Endonuclease III">
    <location>
        <begin position="1"/>
        <end position="223"/>
    </location>
</feature>
<feature type="domain" description="HhH" evidence="1">
    <location>
        <begin position="118"/>
        <end position="137"/>
    </location>
</feature>
<feature type="binding site" evidence="1">
    <location>
        <position position="198"/>
    </location>
    <ligand>
        <name>[4Fe-4S] cluster</name>
        <dbReference type="ChEBI" id="CHEBI:49883"/>
    </ligand>
</feature>
<feature type="binding site" evidence="1">
    <location>
        <position position="205"/>
    </location>
    <ligand>
        <name>[4Fe-4S] cluster</name>
        <dbReference type="ChEBI" id="CHEBI:49883"/>
    </ligand>
</feature>
<feature type="binding site" evidence="1">
    <location>
        <position position="208"/>
    </location>
    <ligand>
        <name>[4Fe-4S] cluster</name>
        <dbReference type="ChEBI" id="CHEBI:49883"/>
    </ligand>
</feature>
<feature type="binding site" evidence="1">
    <location>
        <position position="214"/>
    </location>
    <ligand>
        <name>[4Fe-4S] cluster</name>
        <dbReference type="ChEBI" id="CHEBI:49883"/>
    </ligand>
</feature>
<feature type="mutagenesis site" description="2% nicking UV-treated DNA. No nicking of UV-treated DNA; when associated with A-148." evidence="2">
    <original>K</original>
    <variation>A</variation>
    <location>
        <position position="130"/>
    </location>
</feature>
<feature type="mutagenesis site" description="18% nicking UV-treated DNA. No nicking of UV-treated DNA; when associated with A-130." evidence="2">
    <original>D</original>
    <variation>A</variation>
    <location>
        <position position="148"/>
    </location>
</feature>